<gene>
    <name evidence="1" type="primary">rpmG</name>
    <name type="ordered locus">DET0996</name>
</gene>
<dbReference type="EMBL" id="CP000027">
    <property type="protein sequence ID" value="AAW40614.1"/>
    <property type="molecule type" value="Genomic_DNA"/>
</dbReference>
<dbReference type="RefSeq" id="WP_010936698.1">
    <property type="nucleotide sequence ID" value="NC_002936.3"/>
</dbReference>
<dbReference type="SMR" id="Q3Z7T0"/>
<dbReference type="FunCoup" id="Q3Z7T0">
    <property type="interactions" value="149"/>
</dbReference>
<dbReference type="STRING" id="243164.DET0996"/>
<dbReference type="GeneID" id="3230581"/>
<dbReference type="KEGG" id="det:DET0996"/>
<dbReference type="PATRIC" id="fig|243164.10.peg.945"/>
<dbReference type="eggNOG" id="COG0267">
    <property type="taxonomic scope" value="Bacteria"/>
</dbReference>
<dbReference type="HOGENOM" id="CLU_190949_0_2_0"/>
<dbReference type="InParanoid" id="Q3Z7T0"/>
<dbReference type="Proteomes" id="UP000008289">
    <property type="component" value="Chromosome"/>
</dbReference>
<dbReference type="GO" id="GO:0005737">
    <property type="term" value="C:cytoplasm"/>
    <property type="evidence" value="ECO:0007669"/>
    <property type="project" value="UniProtKB-ARBA"/>
</dbReference>
<dbReference type="GO" id="GO:1990904">
    <property type="term" value="C:ribonucleoprotein complex"/>
    <property type="evidence" value="ECO:0007669"/>
    <property type="project" value="UniProtKB-KW"/>
</dbReference>
<dbReference type="GO" id="GO:0005840">
    <property type="term" value="C:ribosome"/>
    <property type="evidence" value="ECO:0007669"/>
    <property type="project" value="UniProtKB-KW"/>
</dbReference>
<dbReference type="GO" id="GO:0003735">
    <property type="term" value="F:structural constituent of ribosome"/>
    <property type="evidence" value="ECO:0007669"/>
    <property type="project" value="InterPro"/>
</dbReference>
<dbReference type="GO" id="GO:0006412">
    <property type="term" value="P:translation"/>
    <property type="evidence" value="ECO:0007669"/>
    <property type="project" value="UniProtKB-UniRule"/>
</dbReference>
<dbReference type="Gene3D" id="2.20.28.120">
    <property type="entry name" value="Ribosomal protein L33"/>
    <property type="match status" value="1"/>
</dbReference>
<dbReference type="HAMAP" id="MF_00294">
    <property type="entry name" value="Ribosomal_bL33"/>
    <property type="match status" value="1"/>
</dbReference>
<dbReference type="InterPro" id="IPR001705">
    <property type="entry name" value="Ribosomal_bL33"/>
</dbReference>
<dbReference type="InterPro" id="IPR018264">
    <property type="entry name" value="Ribosomal_bL33_CS"/>
</dbReference>
<dbReference type="InterPro" id="IPR038584">
    <property type="entry name" value="Ribosomal_bL33_sf"/>
</dbReference>
<dbReference type="InterPro" id="IPR011332">
    <property type="entry name" value="Ribosomal_zn-bd"/>
</dbReference>
<dbReference type="NCBIfam" id="NF001764">
    <property type="entry name" value="PRK00504.1"/>
    <property type="match status" value="1"/>
</dbReference>
<dbReference type="NCBIfam" id="NF001860">
    <property type="entry name" value="PRK00595.1"/>
    <property type="match status" value="1"/>
</dbReference>
<dbReference type="NCBIfam" id="TIGR01023">
    <property type="entry name" value="rpmG_bact"/>
    <property type="match status" value="1"/>
</dbReference>
<dbReference type="PANTHER" id="PTHR43168">
    <property type="entry name" value="50S RIBOSOMAL PROTEIN L33, CHLOROPLASTIC"/>
    <property type="match status" value="1"/>
</dbReference>
<dbReference type="PANTHER" id="PTHR43168:SF2">
    <property type="entry name" value="LARGE RIBOSOMAL SUBUNIT PROTEIN BL33C"/>
    <property type="match status" value="1"/>
</dbReference>
<dbReference type="Pfam" id="PF00471">
    <property type="entry name" value="Ribosomal_L33"/>
    <property type="match status" value="1"/>
</dbReference>
<dbReference type="SUPFAM" id="SSF57829">
    <property type="entry name" value="Zn-binding ribosomal proteins"/>
    <property type="match status" value="1"/>
</dbReference>
<dbReference type="PROSITE" id="PS00582">
    <property type="entry name" value="RIBOSOMAL_L33"/>
    <property type="match status" value="1"/>
</dbReference>
<accession>Q3Z7T0</accession>
<keyword id="KW-0687">Ribonucleoprotein</keyword>
<keyword id="KW-0689">Ribosomal protein</keyword>
<proteinExistence type="inferred from homology"/>
<reference key="1">
    <citation type="journal article" date="2005" name="Science">
        <title>Genome sequence of the PCE-dechlorinating bacterium Dehalococcoides ethenogenes.</title>
        <authorList>
            <person name="Seshadri R."/>
            <person name="Adrian L."/>
            <person name="Fouts D.E."/>
            <person name="Eisen J.A."/>
            <person name="Phillippy A.M."/>
            <person name="Methe B.A."/>
            <person name="Ward N.L."/>
            <person name="Nelson W.C."/>
            <person name="DeBoy R.T."/>
            <person name="Khouri H.M."/>
            <person name="Kolonay J.F."/>
            <person name="Dodson R.J."/>
            <person name="Daugherty S.C."/>
            <person name="Brinkac L.M."/>
            <person name="Sullivan S.A."/>
            <person name="Madupu R."/>
            <person name="Nelson K.E."/>
            <person name="Kang K.H."/>
            <person name="Impraim M."/>
            <person name="Tran K."/>
            <person name="Robinson J.M."/>
            <person name="Forberger H.A."/>
            <person name="Fraser C.M."/>
            <person name="Zinder S.H."/>
            <person name="Heidelberg J.F."/>
        </authorList>
    </citation>
    <scope>NUCLEOTIDE SEQUENCE [LARGE SCALE GENOMIC DNA]</scope>
    <source>
        <strain>ATCC BAA-2266 / KCTC 15142 / 195</strain>
    </source>
</reference>
<protein>
    <recommendedName>
        <fullName evidence="1">Large ribosomal subunit protein bL33</fullName>
    </recommendedName>
    <alternativeName>
        <fullName evidence="2">50S ribosomal protein L33</fullName>
    </alternativeName>
</protein>
<feature type="chain" id="PRO_0000356444" description="Large ribosomal subunit protein bL33">
    <location>
        <begin position="1"/>
        <end position="55"/>
    </location>
</feature>
<organism>
    <name type="scientific">Dehalococcoides mccartyi (strain ATCC BAA-2266 / KCTC 15142 / 195)</name>
    <name type="common">Dehalococcoides ethenogenes (strain 195)</name>
    <dbReference type="NCBI Taxonomy" id="243164"/>
    <lineage>
        <taxon>Bacteria</taxon>
        <taxon>Bacillati</taxon>
        <taxon>Chloroflexota</taxon>
        <taxon>Dehalococcoidia</taxon>
        <taxon>Dehalococcoidales</taxon>
        <taxon>Dehalococcoidaceae</taxon>
        <taxon>Dehalococcoides</taxon>
    </lineage>
</organism>
<evidence type="ECO:0000255" key="1">
    <source>
        <dbReference type="HAMAP-Rule" id="MF_00294"/>
    </source>
</evidence>
<evidence type="ECO:0000305" key="2"/>
<name>RL33_DEHM1</name>
<comment type="similarity">
    <text evidence="1">Belongs to the bacterial ribosomal protein bL33 family.</text>
</comment>
<sequence length="55" mass="6587">MAKKTDTRIVINMACTDCGERNYTTEKNKRNDPRRIELNKYCPRCREAKVHRETK</sequence>